<name>SYP_GEOMG</name>
<reference key="1">
    <citation type="journal article" date="2009" name="BMC Microbiol.">
        <title>The genome sequence of Geobacter metallireducens: features of metabolism, physiology and regulation common and dissimilar to Geobacter sulfurreducens.</title>
        <authorList>
            <person name="Aklujkar M."/>
            <person name="Krushkal J."/>
            <person name="DiBartolo G."/>
            <person name="Lapidus A."/>
            <person name="Land M.L."/>
            <person name="Lovley D.R."/>
        </authorList>
    </citation>
    <scope>NUCLEOTIDE SEQUENCE [LARGE SCALE GENOMIC DNA]</scope>
    <source>
        <strain>ATCC 53774 / DSM 7210 / GS-15</strain>
    </source>
</reference>
<evidence type="ECO:0000255" key="1">
    <source>
        <dbReference type="HAMAP-Rule" id="MF_01569"/>
    </source>
</evidence>
<accession>Q39VY6</accession>
<organism>
    <name type="scientific">Geobacter metallireducens (strain ATCC 53774 / DSM 7210 / GS-15)</name>
    <dbReference type="NCBI Taxonomy" id="269799"/>
    <lineage>
        <taxon>Bacteria</taxon>
        <taxon>Pseudomonadati</taxon>
        <taxon>Thermodesulfobacteriota</taxon>
        <taxon>Desulfuromonadia</taxon>
        <taxon>Geobacterales</taxon>
        <taxon>Geobacteraceae</taxon>
        <taxon>Geobacter</taxon>
    </lineage>
</organism>
<proteinExistence type="inferred from homology"/>
<feature type="chain" id="PRO_0000248697" description="Proline--tRNA ligase">
    <location>
        <begin position="1"/>
        <end position="570"/>
    </location>
</feature>
<sequence>MRYSQYFIPTVKETPSDAEVVSHKLMLRAGMIRKLAAGIYNYLPLGLRSIRKVEQIVREEMNRAGAIELLMPSVQPAELWQESKRWEQYGKELLRFKDRKDAEFCLGPTHEEVITDLVRREVKSYRQLPLNLYQVQSKFRDEIRPRFGLMRGREFIMKDAYSFDVSSEAADTSYDKMYQAYRRIFQRCGLKFRAVEADTGSIGGSSSHEFMVLADSGEDAIVSCTACEYAANVEKAEARLFPSEHAEPRELEKVETPQKRSVEEVTTFLGIPASSLVKTLLCVADGEPVAALVRGDHDLNEIKLKHLLGCEELEMASEEIVERVTGAPVGFAGPVGLKIKIVADLTIQGMKNFVTGGNARDLHFKNVNIGRDFTPALIADIRNVVHGDPCPRCEAGHLEMWRGIEVGHVFKLGTKYSESLRATFLDADGKEQVIFMGCYGIGISRTVAACIEQNHDADGIIFPIPIAPFHCIISAVSTKDAEVVAACDELYRALTAVGVEVLFDDRDERPGSKFKDADLIGIPLRIVVGSKNLAEGKVELKSRKGGEVSLLPLAEAVETVKGLVVAALNQ</sequence>
<protein>
    <recommendedName>
        <fullName evidence="1">Proline--tRNA ligase</fullName>
        <ecNumber evidence="1">6.1.1.15</ecNumber>
    </recommendedName>
    <alternativeName>
        <fullName evidence="1">Prolyl-tRNA synthetase</fullName>
        <shortName evidence="1">ProRS</shortName>
    </alternativeName>
</protein>
<dbReference type="EC" id="6.1.1.15" evidence="1"/>
<dbReference type="EMBL" id="CP000148">
    <property type="protein sequence ID" value="ABB31588.1"/>
    <property type="molecule type" value="Genomic_DNA"/>
</dbReference>
<dbReference type="RefSeq" id="WP_011365817.1">
    <property type="nucleotide sequence ID" value="NC_007517.1"/>
</dbReference>
<dbReference type="SMR" id="Q39VY6"/>
<dbReference type="STRING" id="269799.Gmet_1354"/>
<dbReference type="KEGG" id="gme:Gmet_1354"/>
<dbReference type="eggNOG" id="COG0442">
    <property type="taxonomic scope" value="Bacteria"/>
</dbReference>
<dbReference type="HOGENOM" id="CLU_016739_0_0_7"/>
<dbReference type="Proteomes" id="UP000007073">
    <property type="component" value="Chromosome"/>
</dbReference>
<dbReference type="GO" id="GO:0005829">
    <property type="term" value="C:cytosol"/>
    <property type="evidence" value="ECO:0007669"/>
    <property type="project" value="TreeGrafter"/>
</dbReference>
<dbReference type="GO" id="GO:0002161">
    <property type="term" value="F:aminoacyl-tRNA deacylase activity"/>
    <property type="evidence" value="ECO:0007669"/>
    <property type="project" value="InterPro"/>
</dbReference>
<dbReference type="GO" id="GO:0005524">
    <property type="term" value="F:ATP binding"/>
    <property type="evidence" value="ECO:0007669"/>
    <property type="project" value="UniProtKB-UniRule"/>
</dbReference>
<dbReference type="GO" id="GO:0004827">
    <property type="term" value="F:proline-tRNA ligase activity"/>
    <property type="evidence" value="ECO:0007669"/>
    <property type="project" value="UniProtKB-UniRule"/>
</dbReference>
<dbReference type="GO" id="GO:0006433">
    <property type="term" value="P:prolyl-tRNA aminoacylation"/>
    <property type="evidence" value="ECO:0007669"/>
    <property type="project" value="UniProtKB-UniRule"/>
</dbReference>
<dbReference type="CDD" id="cd04334">
    <property type="entry name" value="ProRS-INS"/>
    <property type="match status" value="1"/>
</dbReference>
<dbReference type="CDD" id="cd00861">
    <property type="entry name" value="ProRS_anticodon_short"/>
    <property type="match status" value="1"/>
</dbReference>
<dbReference type="CDD" id="cd00779">
    <property type="entry name" value="ProRS_core_prok"/>
    <property type="match status" value="1"/>
</dbReference>
<dbReference type="FunFam" id="3.30.930.10:FF:000043">
    <property type="entry name" value="Proline--tRNA ligase"/>
    <property type="match status" value="1"/>
</dbReference>
<dbReference type="FunFam" id="3.30.930.10:FF:000062">
    <property type="entry name" value="Proline--tRNA ligase"/>
    <property type="match status" value="1"/>
</dbReference>
<dbReference type="Gene3D" id="3.40.50.800">
    <property type="entry name" value="Anticodon-binding domain"/>
    <property type="match status" value="1"/>
</dbReference>
<dbReference type="Gene3D" id="3.30.930.10">
    <property type="entry name" value="Bira Bifunctional Protein, Domain 2"/>
    <property type="match status" value="2"/>
</dbReference>
<dbReference type="Gene3D" id="3.90.960.10">
    <property type="entry name" value="YbaK/aminoacyl-tRNA synthetase-associated domain"/>
    <property type="match status" value="1"/>
</dbReference>
<dbReference type="HAMAP" id="MF_01569">
    <property type="entry name" value="Pro_tRNA_synth_type1"/>
    <property type="match status" value="1"/>
</dbReference>
<dbReference type="InterPro" id="IPR002314">
    <property type="entry name" value="aa-tRNA-synt_IIb"/>
</dbReference>
<dbReference type="InterPro" id="IPR006195">
    <property type="entry name" value="aa-tRNA-synth_II"/>
</dbReference>
<dbReference type="InterPro" id="IPR045864">
    <property type="entry name" value="aa-tRNA-synth_II/BPL/LPL"/>
</dbReference>
<dbReference type="InterPro" id="IPR004154">
    <property type="entry name" value="Anticodon-bd"/>
</dbReference>
<dbReference type="InterPro" id="IPR036621">
    <property type="entry name" value="Anticodon-bd_dom_sf"/>
</dbReference>
<dbReference type="InterPro" id="IPR002316">
    <property type="entry name" value="Pro-tRNA-ligase_IIa"/>
</dbReference>
<dbReference type="InterPro" id="IPR004500">
    <property type="entry name" value="Pro-tRNA-synth_IIa_bac-type"/>
</dbReference>
<dbReference type="InterPro" id="IPR023717">
    <property type="entry name" value="Pro-tRNA-Synthase_IIa_type1"/>
</dbReference>
<dbReference type="InterPro" id="IPR050062">
    <property type="entry name" value="Pro-tRNA_synthetase"/>
</dbReference>
<dbReference type="InterPro" id="IPR044140">
    <property type="entry name" value="ProRS_anticodon_short"/>
</dbReference>
<dbReference type="InterPro" id="IPR033730">
    <property type="entry name" value="ProRS_core_prok"/>
</dbReference>
<dbReference type="InterPro" id="IPR036754">
    <property type="entry name" value="YbaK/aa-tRNA-synt-asso_dom_sf"/>
</dbReference>
<dbReference type="InterPro" id="IPR007214">
    <property type="entry name" value="YbaK/aa-tRNA-synth-assoc-dom"/>
</dbReference>
<dbReference type="NCBIfam" id="NF006625">
    <property type="entry name" value="PRK09194.1"/>
    <property type="match status" value="1"/>
</dbReference>
<dbReference type="NCBIfam" id="TIGR00409">
    <property type="entry name" value="proS_fam_II"/>
    <property type="match status" value="1"/>
</dbReference>
<dbReference type="PANTHER" id="PTHR42753">
    <property type="entry name" value="MITOCHONDRIAL RIBOSOME PROTEIN L39/PROLYL-TRNA LIGASE FAMILY MEMBER"/>
    <property type="match status" value="1"/>
</dbReference>
<dbReference type="PANTHER" id="PTHR42753:SF2">
    <property type="entry name" value="PROLINE--TRNA LIGASE"/>
    <property type="match status" value="1"/>
</dbReference>
<dbReference type="Pfam" id="PF03129">
    <property type="entry name" value="HGTP_anticodon"/>
    <property type="match status" value="1"/>
</dbReference>
<dbReference type="Pfam" id="PF00587">
    <property type="entry name" value="tRNA-synt_2b"/>
    <property type="match status" value="1"/>
</dbReference>
<dbReference type="Pfam" id="PF04073">
    <property type="entry name" value="tRNA_edit"/>
    <property type="match status" value="1"/>
</dbReference>
<dbReference type="PIRSF" id="PIRSF001535">
    <property type="entry name" value="ProRS_1"/>
    <property type="match status" value="1"/>
</dbReference>
<dbReference type="PRINTS" id="PR01046">
    <property type="entry name" value="TRNASYNTHPRO"/>
</dbReference>
<dbReference type="SUPFAM" id="SSF52954">
    <property type="entry name" value="Class II aaRS ABD-related"/>
    <property type="match status" value="1"/>
</dbReference>
<dbReference type="SUPFAM" id="SSF55681">
    <property type="entry name" value="Class II aaRS and biotin synthetases"/>
    <property type="match status" value="1"/>
</dbReference>
<dbReference type="SUPFAM" id="SSF55826">
    <property type="entry name" value="YbaK/ProRS associated domain"/>
    <property type="match status" value="1"/>
</dbReference>
<dbReference type="PROSITE" id="PS50862">
    <property type="entry name" value="AA_TRNA_LIGASE_II"/>
    <property type="match status" value="1"/>
</dbReference>
<comment type="function">
    <text evidence="1">Catalyzes the attachment of proline to tRNA(Pro) in a two-step reaction: proline is first activated by ATP to form Pro-AMP and then transferred to the acceptor end of tRNA(Pro). As ProRS can inadvertently accommodate and process non-cognate amino acids such as alanine and cysteine, to avoid such errors it has two additional distinct editing activities against alanine. One activity is designated as 'pretransfer' editing and involves the tRNA(Pro)-independent hydrolysis of activated Ala-AMP. The other activity is designated 'posttransfer' editing and involves deacylation of mischarged Ala-tRNA(Pro). The misacylated Cys-tRNA(Pro) is not edited by ProRS.</text>
</comment>
<comment type="catalytic activity">
    <reaction evidence="1">
        <text>tRNA(Pro) + L-proline + ATP = L-prolyl-tRNA(Pro) + AMP + diphosphate</text>
        <dbReference type="Rhea" id="RHEA:14305"/>
        <dbReference type="Rhea" id="RHEA-COMP:9700"/>
        <dbReference type="Rhea" id="RHEA-COMP:9702"/>
        <dbReference type="ChEBI" id="CHEBI:30616"/>
        <dbReference type="ChEBI" id="CHEBI:33019"/>
        <dbReference type="ChEBI" id="CHEBI:60039"/>
        <dbReference type="ChEBI" id="CHEBI:78442"/>
        <dbReference type="ChEBI" id="CHEBI:78532"/>
        <dbReference type="ChEBI" id="CHEBI:456215"/>
        <dbReference type="EC" id="6.1.1.15"/>
    </reaction>
</comment>
<comment type="subunit">
    <text evidence="1">Homodimer.</text>
</comment>
<comment type="subcellular location">
    <subcellularLocation>
        <location evidence="1">Cytoplasm</location>
    </subcellularLocation>
</comment>
<comment type="domain">
    <text evidence="1">Consists of three domains: the N-terminal catalytic domain, the editing domain and the C-terminal anticodon-binding domain.</text>
</comment>
<comment type="similarity">
    <text evidence="1">Belongs to the class-II aminoacyl-tRNA synthetase family. ProS type 1 subfamily.</text>
</comment>
<gene>
    <name evidence="1" type="primary">proS</name>
    <name type="ordered locus">Gmet_1354</name>
</gene>
<keyword id="KW-0030">Aminoacyl-tRNA synthetase</keyword>
<keyword id="KW-0067">ATP-binding</keyword>
<keyword id="KW-0963">Cytoplasm</keyword>
<keyword id="KW-0436">Ligase</keyword>
<keyword id="KW-0547">Nucleotide-binding</keyword>
<keyword id="KW-0648">Protein biosynthesis</keyword>
<keyword id="KW-1185">Reference proteome</keyword>